<comment type="function">
    <text evidence="2">Catalyzes the reversible conversion of 3-phosphohydroxypyruvate to phosphoserine and of 3-hydroxy-2-oxo-4-phosphonooxybutanoate to phosphohydroxythreonine.</text>
</comment>
<comment type="catalytic activity">
    <reaction>
        <text>O-phospho-L-serine + 2-oxoglutarate = 3-phosphooxypyruvate + L-glutamate</text>
        <dbReference type="Rhea" id="RHEA:14329"/>
        <dbReference type="ChEBI" id="CHEBI:16810"/>
        <dbReference type="ChEBI" id="CHEBI:18110"/>
        <dbReference type="ChEBI" id="CHEBI:29985"/>
        <dbReference type="ChEBI" id="CHEBI:57524"/>
        <dbReference type="EC" id="2.6.1.52"/>
    </reaction>
</comment>
<comment type="catalytic activity">
    <reaction>
        <text>4-(phosphooxy)-L-threonine + 2-oxoglutarate = (R)-3-hydroxy-2-oxo-4-phosphooxybutanoate + L-glutamate</text>
        <dbReference type="Rhea" id="RHEA:16573"/>
        <dbReference type="ChEBI" id="CHEBI:16810"/>
        <dbReference type="ChEBI" id="CHEBI:29985"/>
        <dbReference type="ChEBI" id="CHEBI:58452"/>
        <dbReference type="ChEBI" id="CHEBI:58538"/>
        <dbReference type="EC" id="2.6.1.52"/>
    </reaction>
</comment>
<comment type="cofactor">
    <cofactor evidence="1">
        <name>pyridoxal 5'-phosphate</name>
        <dbReference type="ChEBI" id="CHEBI:597326"/>
    </cofactor>
    <text evidence="1">Binds 1 pyridoxal phosphate per subunit.</text>
</comment>
<comment type="pathway">
    <text>Amino-acid biosynthesis; L-serine biosynthesis; L-serine from 3-phospho-D-glycerate: step 2/3.</text>
</comment>
<comment type="pathway">
    <text>Cofactor biosynthesis; pyridoxine 5'-phosphate biosynthesis; pyridoxine 5'-phosphate from D-erythrose 4-phosphate: step 3/5.</text>
</comment>
<comment type="subunit">
    <text evidence="1">Homodimer.</text>
</comment>
<comment type="subcellular location">
    <subcellularLocation>
        <location evidence="1">Cytoplasm</location>
    </subcellularLocation>
</comment>
<comment type="similarity">
    <text evidence="3">Belongs to the class-V pyridoxal-phosphate-dependent aminotransferase family. SerC subfamily.</text>
</comment>
<accession>P52878</accession>
<accession>Q46CY5</accession>
<feature type="chain" id="PRO_0000150230" description="Phosphoserine aminotransferase">
    <location>
        <begin position="1"/>
        <end position="370"/>
    </location>
</feature>
<feature type="binding site" evidence="1">
    <location>
        <position position="38"/>
    </location>
    <ligand>
        <name>L-glutamate</name>
        <dbReference type="ChEBI" id="CHEBI:29985"/>
    </ligand>
</feature>
<feature type="binding site" evidence="1">
    <location>
        <position position="101"/>
    </location>
    <ligand>
        <name>pyridoxal 5'-phosphate</name>
        <dbReference type="ChEBI" id="CHEBI:597326"/>
    </ligand>
</feature>
<feature type="binding site" evidence="1">
    <location>
        <position position="143"/>
    </location>
    <ligand>
        <name>pyridoxal 5'-phosphate</name>
        <dbReference type="ChEBI" id="CHEBI:597326"/>
    </ligand>
</feature>
<feature type="binding site" evidence="1">
    <location>
        <position position="166"/>
    </location>
    <ligand>
        <name>pyridoxal 5'-phosphate</name>
        <dbReference type="ChEBI" id="CHEBI:597326"/>
    </ligand>
</feature>
<feature type="binding site" evidence="1">
    <location>
        <position position="189"/>
    </location>
    <ligand>
        <name>pyridoxal 5'-phosphate</name>
        <dbReference type="ChEBI" id="CHEBI:597326"/>
    </ligand>
</feature>
<feature type="binding site" evidence="1">
    <location>
        <begin position="243"/>
        <end position="244"/>
    </location>
    <ligand>
        <name>pyridoxal 5'-phosphate</name>
        <dbReference type="ChEBI" id="CHEBI:597326"/>
    </ligand>
</feature>
<feature type="modified residue" description="N6-(pyridoxal phosphate)lysine" evidence="1">
    <location>
        <position position="190"/>
    </location>
</feature>
<protein>
    <recommendedName>
        <fullName>Phosphoserine aminotransferase</fullName>
        <ecNumber>2.6.1.52</ecNumber>
    </recommendedName>
    <alternativeName>
        <fullName>Phosphohydroxythreonine aminotransferase</fullName>
        <shortName>PSAT</shortName>
    </alternativeName>
</protein>
<keyword id="KW-0028">Amino-acid biosynthesis</keyword>
<keyword id="KW-0032">Aminotransferase</keyword>
<keyword id="KW-0963">Cytoplasm</keyword>
<keyword id="KW-0663">Pyridoxal phosphate</keyword>
<keyword id="KW-0664">Pyridoxine biosynthesis</keyword>
<keyword id="KW-0718">Serine biosynthesis</keyword>
<keyword id="KW-0808">Transferase</keyword>
<reference key="1">
    <citation type="journal article" date="1996" name="J. Bacteriol.">
        <title>Molecular, genetic, and biochemical characterization of the serC gene of Methanosarcina barkeri Fusaro.</title>
        <authorList>
            <person name="Metcalf W.W."/>
            <person name="Zhang J.-K."/>
            <person name="Shi X."/>
            <person name="Wolfe R.S."/>
        </authorList>
    </citation>
    <scope>NUCLEOTIDE SEQUENCE [GENOMIC DNA]</scope>
    <scope>FUNCTION AS A PHOSPHOSERINE AMINOTRANSFERASE</scope>
    <scope>IDENTIFICATION OF THE TRANSCRIPTIONAL START SITE</scope>
</reference>
<reference key="2">
    <citation type="journal article" date="2006" name="J. Bacteriol.">
        <title>The Methanosarcina barkeri genome: comparative analysis with Methanosarcina acetivorans and Methanosarcina mazei reveals extensive rearrangement within methanosarcinal genomes.</title>
        <authorList>
            <person name="Maeder D.L."/>
            <person name="Anderson I."/>
            <person name="Brettin T.S."/>
            <person name="Bruce D.C."/>
            <person name="Gilna P."/>
            <person name="Han C.S."/>
            <person name="Lapidus A."/>
            <person name="Metcalf W.W."/>
            <person name="Saunders E."/>
            <person name="Tapia R."/>
            <person name="Sowers K.R."/>
        </authorList>
    </citation>
    <scope>NUCLEOTIDE SEQUENCE [LARGE SCALE GENOMIC DNA]</scope>
    <source>
        <strain>Fusaro / DSM 804</strain>
    </source>
</reference>
<sequence length="370" mass="41544">MKPTRVPNNPCFSSGPCAKHPGYSIEELKDTPFGRSHRSNLGKEKLAEAIKKTRDMLGLPDDYLVGIVPASDTGAFEMCLWSMLGCRGVDVLVWESFSKGWATDITKQLKLKDVRVFEAEYGKLPDLKKVDFKNDVVFVWNGTTSGVKVPNGDWIPENREGLTLCDATSAIFAMDIPYHKLDVITFSWQKVLGGEGAHGMLILSPRAVQRLESYTPAWPLPKIFRLTKGGKLNKKIFEGSTINTPSMLANEDWLATLKWAESVGGLKPLIQRTNDNLAVFEAFVAKNNWIHFLAETKEIRSSTSVCFKVDLSDEKLKELIKTLEKEKVAYDIGSYRDAPSGLRIWCGATVEKEDLQCLCEWIEWAYNLVK</sequence>
<dbReference type="EC" id="2.6.1.52"/>
<dbReference type="EMBL" id="U51905">
    <property type="protein sequence ID" value="AAC44430.1"/>
    <property type="molecule type" value="Genomic_DNA"/>
</dbReference>
<dbReference type="EMBL" id="CP000099">
    <property type="protein sequence ID" value="AAZ70257.1"/>
    <property type="molecule type" value="Genomic_DNA"/>
</dbReference>
<dbReference type="SMR" id="P52878"/>
<dbReference type="STRING" id="269797.Mbar_A1294"/>
<dbReference type="PaxDb" id="269797-Mbar_A1294"/>
<dbReference type="KEGG" id="mba:Mbar_A1294"/>
<dbReference type="eggNOG" id="arCOG00083">
    <property type="taxonomic scope" value="Archaea"/>
</dbReference>
<dbReference type="HOGENOM" id="CLU_040283_0_0_2"/>
<dbReference type="OrthoDB" id="132073at2157"/>
<dbReference type="BRENDA" id="2.6.1.52">
    <property type="organism ID" value="3250"/>
</dbReference>
<dbReference type="UniPathway" id="UPA00135">
    <property type="reaction ID" value="UER00197"/>
</dbReference>
<dbReference type="UniPathway" id="UPA00244">
    <property type="reaction ID" value="UER00311"/>
</dbReference>
<dbReference type="GO" id="GO:0005737">
    <property type="term" value="C:cytoplasm"/>
    <property type="evidence" value="ECO:0007669"/>
    <property type="project" value="UniProtKB-SubCell"/>
</dbReference>
<dbReference type="GO" id="GO:0004648">
    <property type="term" value="F:O-phospho-L-serine:2-oxoglutarate aminotransferase activity"/>
    <property type="evidence" value="ECO:0007669"/>
    <property type="project" value="UniProtKB-UniRule"/>
</dbReference>
<dbReference type="GO" id="GO:0030170">
    <property type="term" value="F:pyridoxal phosphate binding"/>
    <property type="evidence" value="ECO:0007669"/>
    <property type="project" value="UniProtKB-UniRule"/>
</dbReference>
<dbReference type="GO" id="GO:0006564">
    <property type="term" value="P:L-serine biosynthetic process"/>
    <property type="evidence" value="ECO:0007669"/>
    <property type="project" value="UniProtKB-UniRule"/>
</dbReference>
<dbReference type="GO" id="GO:0008615">
    <property type="term" value="P:pyridoxine biosynthetic process"/>
    <property type="evidence" value="ECO:0007669"/>
    <property type="project" value="UniProtKB-UniRule"/>
</dbReference>
<dbReference type="CDD" id="cd01494">
    <property type="entry name" value="AAT_I"/>
    <property type="match status" value="1"/>
</dbReference>
<dbReference type="Gene3D" id="3.90.1150.10">
    <property type="entry name" value="Aspartate Aminotransferase, domain 1"/>
    <property type="match status" value="1"/>
</dbReference>
<dbReference type="Gene3D" id="3.40.640.10">
    <property type="entry name" value="Type I PLP-dependent aspartate aminotransferase-like (Major domain)"/>
    <property type="match status" value="1"/>
</dbReference>
<dbReference type="HAMAP" id="MF_00160">
    <property type="entry name" value="SerC_aminotrans_5"/>
    <property type="match status" value="1"/>
</dbReference>
<dbReference type="InterPro" id="IPR022278">
    <property type="entry name" value="Pser_aminoTfrase"/>
</dbReference>
<dbReference type="InterPro" id="IPR006271">
    <property type="entry name" value="Pser_aminoTfrase_methanosarc"/>
</dbReference>
<dbReference type="InterPro" id="IPR015424">
    <property type="entry name" value="PyrdxlP-dep_Trfase"/>
</dbReference>
<dbReference type="InterPro" id="IPR015421">
    <property type="entry name" value="PyrdxlP-dep_Trfase_major"/>
</dbReference>
<dbReference type="InterPro" id="IPR015422">
    <property type="entry name" value="PyrdxlP-dep_Trfase_small"/>
</dbReference>
<dbReference type="NCBIfam" id="NF002841">
    <property type="entry name" value="PRK03080.1-2"/>
    <property type="match status" value="1"/>
</dbReference>
<dbReference type="NCBIfam" id="TIGR01365">
    <property type="entry name" value="serC_2"/>
    <property type="match status" value="1"/>
</dbReference>
<dbReference type="PANTHER" id="PTHR21152:SF40">
    <property type="entry name" value="ALANINE--GLYOXYLATE AMINOTRANSFERASE"/>
    <property type="match status" value="1"/>
</dbReference>
<dbReference type="PANTHER" id="PTHR21152">
    <property type="entry name" value="AMINOTRANSFERASE CLASS V"/>
    <property type="match status" value="1"/>
</dbReference>
<dbReference type="PIRSF" id="PIRSF000525">
    <property type="entry name" value="SerC"/>
    <property type="match status" value="1"/>
</dbReference>
<dbReference type="SUPFAM" id="SSF53383">
    <property type="entry name" value="PLP-dependent transferases"/>
    <property type="match status" value="1"/>
</dbReference>
<gene>
    <name type="primary">serC</name>
    <name type="ordered locus">Mbar_A1294</name>
</gene>
<evidence type="ECO:0000250" key="1"/>
<evidence type="ECO:0000269" key="2">
    <source>
    </source>
</evidence>
<evidence type="ECO:0000305" key="3"/>
<proteinExistence type="evidence at protein level"/>
<organism>
    <name type="scientific">Methanosarcina barkeri (strain Fusaro / DSM 804)</name>
    <dbReference type="NCBI Taxonomy" id="269797"/>
    <lineage>
        <taxon>Archaea</taxon>
        <taxon>Methanobacteriati</taxon>
        <taxon>Methanobacteriota</taxon>
        <taxon>Stenosarchaea group</taxon>
        <taxon>Methanomicrobia</taxon>
        <taxon>Methanosarcinales</taxon>
        <taxon>Methanosarcinaceae</taxon>
        <taxon>Methanosarcina</taxon>
    </lineage>
</organism>
<name>SERC_METBF</name>